<reference key="1">
    <citation type="journal article" date="2002" name="J. Bacteriol.">
        <title>Whole-genome comparison of Mycobacterium tuberculosis clinical and laboratory strains.</title>
        <authorList>
            <person name="Fleischmann R.D."/>
            <person name="Alland D."/>
            <person name="Eisen J.A."/>
            <person name="Carpenter L."/>
            <person name="White O."/>
            <person name="Peterson J.D."/>
            <person name="DeBoy R.T."/>
            <person name="Dodson R.J."/>
            <person name="Gwinn M.L."/>
            <person name="Haft D.H."/>
            <person name="Hickey E.K."/>
            <person name="Kolonay J.F."/>
            <person name="Nelson W.C."/>
            <person name="Umayam L.A."/>
            <person name="Ermolaeva M.D."/>
            <person name="Salzberg S.L."/>
            <person name="Delcher A."/>
            <person name="Utterback T.R."/>
            <person name="Weidman J.F."/>
            <person name="Khouri H.M."/>
            <person name="Gill J."/>
            <person name="Mikula A."/>
            <person name="Bishai W."/>
            <person name="Jacobs W.R. Jr."/>
            <person name="Venter J.C."/>
            <person name="Fraser C.M."/>
        </authorList>
    </citation>
    <scope>NUCLEOTIDE SEQUENCE [LARGE SCALE GENOMIC DNA]</scope>
    <source>
        <strain>CDC 1551 / Oshkosh</strain>
    </source>
</reference>
<proteinExistence type="inferred from homology"/>
<keyword id="KW-0032">Aminotransferase</keyword>
<keyword id="KW-1185">Reference proteome</keyword>
<keyword id="KW-0808">Transferase</keyword>
<gene>
    <name evidence="1" type="primary">gcvT</name>
    <name type="ordered locus">MT2267</name>
</gene>
<organism>
    <name type="scientific">Mycobacterium tuberculosis (strain CDC 1551 / Oshkosh)</name>
    <dbReference type="NCBI Taxonomy" id="83331"/>
    <lineage>
        <taxon>Bacteria</taxon>
        <taxon>Bacillati</taxon>
        <taxon>Actinomycetota</taxon>
        <taxon>Actinomycetes</taxon>
        <taxon>Mycobacteriales</taxon>
        <taxon>Mycobacteriaceae</taxon>
        <taxon>Mycobacterium</taxon>
        <taxon>Mycobacterium tuberculosis complex</taxon>
    </lineage>
</organism>
<sequence>MSDVPELIHGPLEDRHRELGASFAEFGGWLMPVSYAGTVSEHNATRTAVGLFDVSHLGKALVRGPGAAQFVNSALTNDLGRIGPGKAQYTLCCTESGGVIDDLIAYYVSDDEIFLVPNAANTAAVVGALQAAAPGGLSITNLHRSYAVLAVQGPCSTDVLTALGLPTEMDYMGYADASYSGVPVRVCRTGYTGEHGYELLPPWESAGVVFDALLAAVSAAGGEPAGLGARDTLRTEMGYPLHGHELSLDISPLQARCGWAVGWRKDAFFGRAALLAEKAAGPRRLLRGLRMVGRGVLRPGLAVLVGDETVGVTTSGTFSPTLQVGIGLALIDSDAGIEDGQQINVDVRGRAVECQVVCPPFVAVKTR</sequence>
<feature type="chain" id="PRO_0000427188" description="Aminomethyltransferase">
    <location>
        <begin position="1"/>
        <end position="367"/>
    </location>
</feature>
<protein>
    <recommendedName>
        <fullName evidence="1">Aminomethyltransferase</fullName>
        <ecNumber evidence="1">2.1.2.10</ecNumber>
    </recommendedName>
    <alternativeName>
        <fullName evidence="1">Glycine cleavage system T protein</fullName>
    </alternativeName>
</protein>
<name>GCST_MYCTO</name>
<comment type="function">
    <text evidence="1">The glycine cleavage system catalyzes the degradation of glycine.</text>
</comment>
<comment type="catalytic activity">
    <reaction evidence="1">
        <text>N(6)-[(R)-S(8)-aminomethyldihydrolipoyl]-L-lysyl-[protein] + (6S)-5,6,7,8-tetrahydrofolate = N(6)-[(R)-dihydrolipoyl]-L-lysyl-[protein] + (6R)-5,10-methylene-5,6,7,8-tetrahydrofolate + NH4(+)</text>
        <dbReference type="Rhea" id="RHEA:16945"/>
        <dbReference type="Rhea" id="RHEA-COMP:10475"/>
        <dbReference type="Rhea" id="RHEA-COMP:10492"/>
        <dbReference type="ChEBI" id="CHEBI:15636"/>
        <dbReference type="ChEBI" id="CHEBI:28938"/>
        <dbReference type="ChEBI" id="CHEBI:57453"/>
        <dbReference type="ChEBI" id="CHEBI:83100"/>
        <dbReference type="ChEBI" id="CHEBI:83143"/>
        <dbReference type="EC" id="2.1.2.10"/>
    </reaction>
</comment>
<comment type="subunit">
    <text evidence="1">The glycine cleavage system is composed of four proteins: P, T, L and H.</text>
</comment>
<comment type="similarity">
    <text evidence="1">Belongs to the GcvT family.</text>
</comment>
<comment type="sequence caution" evidence="2">
    <conflict type="erroneous initiation">
        <sequence resource="EMBL-CDS" id="AAK46553"/>
    </conflict>
</comment>
<accession>P9WN50</accession>
<accession>L0TAI2</accession>
<accession>P64220</accession>
<accession>Q10376</accession>
<evidence type="ECO:0000255" key="1">
    <source>
        <dbReference type="HAMAP-Rule" id="MF_00259"/>
    </source>
</evidence>
<evidence type="ECO:0000305" key="2"/>
<dbReference type="EC" id="2.1.2.10" evidence="1"/>
<dbReference type="EMBL" id="AE000516">
    <property type="protein sequence ID" value="AAK46553.1"/>
    <property type="status" value="ALT_INIT"/>
    <property type="molecule type" value="Genomic_DNA"/>
</dbReference>
<dbReference type="PIR" id="D70786">
    <property type="entry name" value="D70786"/>
</dbReference>
<dbReference type="RefSeq" id="WP_003899219.1">
    <property type="nucleotide sequence ID" value="NZ_KK341227.1"/>
</dbReference>
<dbReference type="SMR" id="P9WN50"/>
<dbReference type="GeneID" id="45426187"/>
<dbReference type="KEGG" id="mtc:MT2267"/>
<dbReference type="HOGENOM" id="CLU_007884_10_2_11"/>
<dbReference type="Proteomes" id="UP000001020">
    <property type="component" value="Chromosome"/>
</dbReference>
<dbReference type="GO" id="GO:0005829">
    <property type="term" value="C:cytosol"/>
    <property type="evidence" value="ECO:0007669"/>
    <property type="project" value="TreeGrafter"/>
</dbReference>
<dbReference type="GO" id="GO:0005960">
    <property type="term" value="C:glycine cleavage complex"/>
    <property type="evidence" value="ECO:0007669"/>
    <property type="project" value="InterPro"/>
</dbReference>
<dbReference type="GO" id="GO:0004047">
    <property type="term" value="F:aminomethyltransferase activity"/>
    <property type="evidence" value="ECO:0007669"/>
    <property type="project" value="UniProtKB-UniRule"/>
</dbReference>
<dbReference type="GO" id="GO:0008483">
    <property type="term" value="F:transaminase activity"/>
    <property type="evidence" value="ECO:0007669"/>
    <property type="project" value="UniProtKB-KW"/>
</dbReference>
<dbReference type="GO" id="GO:0019464">
    <property type="term" value="P:glycine decarboxylation via glycine cleavage system"/>
    <property type="evidence" value="ECO:0007669"/>
    <property type="project" value="UniProtKB-UniRule"/>
</dbReference>
<dbReference type="FunFam" id="3.30.70.1400:FF:000001">
    <property type="entry name" value="Aminomethyltransferase"/>
    <property type="match status" value="1"/>
</dbReference>
<dbReference type="FunFam" id="4.10.1250.10:FF:000001">
    <property type="entry name" value="Aminomethyltransferase"/>
    <property type="match status" value="1"/>
</dbReference>
<dbReference type="Gene3D" id="2.40.30.110">
    <property type="entry name" value="Aminomethyltransferase beta-barrel domains"/>
    <property type="match status" value="1"/>
</dbReference>
<dbReference type="Gene3D" id="3.30.70.1400">
    <property type="entry name" value="Aminomethyltransferase beta-barrel domains"/>
    <property type="match status" value="1"/>
</dbReference>
<dbReference type="Gene3D" id="4.10.1250.10">
    <property type="entry name" value="Aminomethyltransferase fragment"/>
    <property type="match status" value="1"/>
</dbReference>
<dbReference type="Gene3D" id="3.30.1360.120">
    <property type="entry name" value="Probable tRNA modification gtpase trme, domain 1"/>
    <property type="match status" value="1"/>
</dbReference>
<dbReference type="HAMAP" id="MF_00259">
    <property type="entry name" value="GcvT"/>
    <property type="match status" value="1"/>
</dbReference>
<dbReference type="InterPro" id="IPR006223">
    <property type="entry name" value="GCS_T"/>
</dbReference>
<dbReference type="InterPro" id="IPR022903">
    <property type="entry name" value="GCS_T_bac"/>
</dbReference>
<dbReference type="InterPro" id="IPR013977">
    <property type="entry name" value="GCST_C"/>
</dbReference>
<dbReference type="InterPro" id="IPR006222">
    <property type="entry name" value="GCV_T_N"/>
</dbReference>
<dbReference type="InterPro" id="IPR028896">
    <property type="entry name" value="GcvT/YgfZ/DmdA"/>
</dbReference>
<dbReference type="InterPro" id="IPR029043">
    <property type="entry name" value="GcvT/YgfZ_C"/>
</dbReference>
<dbReference type="InterPro" id="IPR027266">
    <property type="entry name" value="TrmE/GcvT_dom1"/>
</dbReference>
<dbReference type="NCBIfam" id="TIGR00528">
    <property type="entry name" value="gcvT"/>
    <property type="match status" value="1"/>
</dbReference>
<dbReference type="NCBIfam" id="NF001567">
    <property type="entry name" value="PRK00389.1"/>
    <property type="match status" value="1"/>
</dbReference>
<dbReference type="PANTHER" id="PTHR43757">
    <property type="entry name" value="AMINOMETHYLTRANSFERASE"/>
    <property type="match status" value="1"/>
</dbReference>
<dbReference type="PANTHER" id="PTHR43757:SF2">
    <property type="entry name" value="AMINOMETHYLTRANSFERASE, MITOCHONDRIAL"/>
    <property type="match status" value="1"/>
</dbReference>
<dbReference type="Pfam" id="PF01571">
    <property type="entry name" value="GCV_T"/>
    <property type="match status" value="1"/>
</dbReference>
<dbReference type="Pfam" id="PF08669">
    <property type="entry name" value="GCV_T_C"/>
    <property type="match status" value="1"/>
</dbReference>
<dbReference type="PIRSF" id="PIRSF006487">
    <property type="entry name" value="GcvT"/>
    <property type="match status" value="1"/>
</dbReference>
<dbReference type="SUPFAM" id="SSF101790">
    <property type="entry name" value="Aminomethyltransferase beta-barrel domain"/>
    <property type="match status" value="1"/>
</dbReference>
<dbReference type="SUPFAM" id="SSF103025">
    <property type="entry name" value="Folate-binding domain"/>
    <property type="match status" value="1"/>
</dbReference>